<organism>
    <name type="scientific">Streptococcus pyogenes serotype M12 (strain MGAS2096)</name>
    <dbReference type="NCBI Taxonomy" id="370553"/>
    <lineage>
        <taxon>Bacteria</taxon>
        <taxon>Bacillati</taxon>
        <taxon>Bacillota</taxon>
        <taxon>Bacilli</taxon>
        <taxon>Lactobacillales</taxon>
        <taxon>Streptococcaceae</taxon>
        <taxon>Streptococcus</taxon>
    </lineage>
</organism>
<evidence type="ECO:0000255" key="1">
    <source>
        <dbReference type="HAMAP-Rule" id="MF_00128"/>
    </source>
</evidence>
<gene>
    <name evidence="1" type="primary">nrdI</name>
    <name type="ordered locus">MGAS2096_Spy0367</name>
</gene>
<name>NRDI_STRPB</name>
<reference key="1">
    <citation type="journal article" date="2006" name="Proc. Natl. Acad. Sci. U.S.A.">
        <title>Molecular genetic anatomy of inter- and intraserotype variation in the human bacterial pathogen group A Streptococcus.</title>
        <authorList>
            <person name="Beres S.B."/>
            <person name="Richter E.W."/>
            <person name="Nagiec M.J."/>
            <person name="Sumby P."/>
            <person name="Porcella S.F."/>
            <person name="DeLeo F.R."/>
            <person name="Musser J.M."/>
        </authorList>
    </citation>
    <scope>NUCLEOTIDE SEQUENCE [LARGE SCALE GENOMIC DNA]</scope>
    <source>
        <strain>MGAS2096</strain>
    </source>
</reference>
<proteinExistence type="inferred from homology"/>
<comment type="function">
    <text evidence="1">Probably involved in ribonucleotide reductase function.</text>
</comment>
<comment type="similarity">
    <text evidence="1">Belongs to the NrdI family.</text>
</comment>
<protein>
    <recommendedName>
        <fullName evidence="1">Protein NrdI</fullName>
    </recommendedName>
</protein>
<dbReference type="EMBL" id="CP000261">
    <property type="protein sequence ID" value="ABF35419.1"/>
    <property type="molecule type" value="Genomic_DNA"/>
</dbReference>
<dbReference type="SMR" id="Q1JD89"/>
<dbReference type="KEGG" id="spj:MGAS2096_Spy0367"/>
<dbReference type="HOGENOM" id="CLU_114845_0_0_9"/>
<dbReference type="GO" id="GO:0010181">
    <property type="term" value="F:FMN binding"/>
    <property type="evidence" value="ECO:0007669"/>
    <property type="project" value="InterPro"/>
</dbReference>
<dbReference type="GO" id="GO:0036211">
    <property type="term" value="P:protein modification process"/>
    <property type="evidence" value="ECO:0007669"/>
    <property type="project" value="InterPro"/>
</dbReference>
<dbReference type="Gene3D" id="3.40.50.360">
    <property type="match status" value="1"/>
</dbReference>
<dbReference type="HAMAP" id="MF_00128">
    <property type="entry name" value="NrdI"/>
    <property type="match status" value="1"/>
</dbReference>
<dbReference type="InterPro" id="IPR029039">
    <property type="entry name" value="Flavoprotein-like_sf"/>
</dbReference>
<dbReference type="InterPro" id="IPR020852">
    <property type="entry name" value="RNR_Ib_NrdI_bac"/>
</dbReference>
<dbReference type="InterPro" id="IPR004465">
    <property type="entry name" value="RNR_NrdI"/>
</dbReference>
<dbReference type="NCBIfam" id="TIGR00333">
    <property type="entry name" value="nrdI"/>
    <property type="match status" value="1"/>
</dbReference>
<dbReference type="PANTHER" id="PTHR37297">
    <property type="entry name" value="PROTEIN NRDI"/>
    <property type="match status" value="1"/>
</dbReference>
<dbReference type="PANTHER" id="PTHR37297:SF1">
    <property type="entry name" value="PROTEIN NRDI"/>
    <property type="match status" value="1"/>
</dbReference>
<dbReference type="Pfam" id="PF07972">
    <property type="entry name" value="Flavodoxin_NdrI"/>
    <property type="match status" value="1"/>
</dbReference>
<dbReference type="PIRSF" id="PIRSF005087">
    <property type="entry name" value="NrdI"/>
    <property type="match status" value="1"/>
</dbReference>
<dbReference type="SUPFAM" id="SSF52218">
    <property type="entry name" value="Flavoproteins"/>
    <property type="match status" value="1"/>
</dbReference>
<accession>Q1JD89</accession>
<sequence>MAELIIVYFSSKSNNTHRFVQKLGLPAQRIPVDNRPLEVSTHYLLIVPTYAAGGSDAKGAVPKQVIRFLNNPNNRKHCKGVISSGNTNFGDTFALAGPIISQKLQVPLLHQFELLGTATDVKKVQAIFARLKHHTHDKQKQTNNLITERTHPCHKPMRHTSH</sequence>
<feature type="chain" id="PRO_1000016530" description="Protein NrdI">
    <location>
        <begin position="1"/>
        <end position="162"/>
    </location>
</feature>